<reference key="1">
    <citation type="journal article" date="2002" name="Nature">
        <title>Comparison of the genomes of two Xanthomonas pathogens with differing host specificities.</title>
        <authorList>
            <person name="da Silva A.C.R."/>
            <person name="Ferro J.A."/>
            <person name="Reinach F.C."/>
            <person name="Farah C.S."/>
            <person name="Furlan L.R."/>
            <person name="Quaggio R.B."/>
            <person name="Monteiro-Vitorello C.B."/>
            <person name="Van Sluys M.A."/>
            <person name="Almeida N.F. Jr."/>
            <person name="Alves L.M.C."/>
            <person name="do Amaral A.M."/>
            <person name="Bertolini M.C."/>
            <person name="Camargo L.E.A."/>
            <person name="Camarotte G."/>
            <person name="Cannavan F."/>
            <person name="Cardozo J."/>
            <person name="Chambergo F."/>
            <person name="Ciapina L.P."/>
            <person name="Cicarelli R.M.B."/>
            <person name="Coutinho L.L."/>
            <person name="Cursino-Santos J.R."/>
            <person name="El-Dorry H."/>
            <person name="Faria J.B."/>
            <person name="Ferreira A.J.S."/>
            <person name="Ferreira R.C.C."/>
            <person name="Ferro M.I.T."/>
            <person name="Formighieri E.F."/>
            <person name="Franco M.C."/>
            <person name="Greggio C.C."/>
            <person name="Gruber A."/>
            <person name="Katsuyama A.M."/>
            <person name="Kishi L.T."/>
            <person name="Leite R.P."/>
            <person name="Lemos E.G.M."/>
            <person name="Lemos M.V.F."/>
            <person name="Locali E.C."/>
            <person name="Machado M.A."/>
            <person name="Madeira A.M.B.N."/>
            <person name="Martinez-Rossi N.M."/>
            <person name="Martins E.C."/>
            <person name="Meidanis J."/>
            <person name="Menck C.F.M."/>
            <person name="Miyaki C.Y."/>
            <person name="Moon D.H."/>
            <person name="Moreira L.M."/>
            <person name="Novo M.T.M."/>
            <person name="Okura V.K."/>
            <person name="Oliveira M.C."/>
            <person name="Oliveira V.R."/>
            <person name="Pereira H.A."/>
            <person name="Rossi A."/>
            <person name="Sena J.A.D."/>
            <person name="Silva C."/>
            <person name="de Souza R.F."/>
            <person name="Spinola L.A.F."/>
            <person name="Takita M.A."/>
            <person name="Tamura R.E."/>
            <person name="Teixeira E.C."/>
            <person name="Tezza R.I.D."/>
            <person name="Trindade dos Santos M."/>
            <person name="Truffi D."/>
            <person name="Tsai S.M."/>
            <person name="White F.F."/>
            <person name="Setubal J.C."/>
            <person name="Kitajima J.P."/>
        </authorList>
    </citation>
    <scope>NUCLEOTIDE SEQUENCE [LARGE SCALE GENOMIC DNA]</scope>
    <source>
        <strain>ATCC 33913 / DSM 3586 / NCPPB 528 / LMG 568 / P 25</strain>
    </source>
</reference>
<name>BETA_XANCP</name>
<comment type="function">
    <text evidence="1">Involved in the biosynthesis of the osmoprotectant glycine betaine. Catalyzes the oxidation of choline to betaine aldehyde and betaine aldehyde to glycine betaine at the same rate.</text>
</comment>
<comment type="catalytic activity">
    <reaction evidence="1">
        <text>choline + A = betaine aldehyde + AH2</text>
        <dbReference type="Rhea" id="RHEA:17433"/>
        <dbReference type="ChEBI" id="CHEBI:13193"/>
        <dbReference type="ChEBI" id="CHEBI:15354"/>
        <dbReference type="ChEBI" id="CHEBI:15710"/>
        <dbReference type="ChEBI" id="CHEBI:17499"/>
        <dbReference type="EC" id="1.1.99.1"/>
    </reaction>
</comment>
<comment type="catalytic activity">
    <reaction evidence="1">
        <text>betaine aldehyde + NAD(+) + H2O = glycine betaine + NADH + 2 H(+)</text>
        <dbReference type="Rhea" id="RHEA:15305"/>
        <dbReference type="ChEBI" id="CHEBI:15377"/>
        <dbReference type="ChEBI" id="CHEBI:15378"/>
        <dbReference type="ChEBI" id="CHEBI:15710"/>
        <dbReference type="ChEBI" id="CHEBI:17750"/>
        <dbReference type="ChEBI" id="CHEBI:57540"/>
        <dbReference type="ChEBI" id="CHEBI:57945"/>
        <dbReference type="EC" id="1.2.1.8"/>
    </reaction>
</comment>
<comment type="cofactor">
    <cofactor evidence="1">
        <name>FAD</name>
        <dbReference type="ChEBI" id="CHEBI:57692"/>
    </cofactor>
</comment>
<comment type="pathway">
    <text evidence="1">Amine and polyamine biosynthesis; betaine biosynthesis via choline pathway; betaine aldehyde from choline (cytochrome c reductase route): step 1/1.</text>
</comment>
<comment type="similarity">
    <text evidence="1">Belongs to the GMC oxidoreductase family.</text>
</comment>
<feature type="chain" id="PRO_0000205609" description="Oxygen-dependent choline dehydrogenase">
    <location>
        <begin position="1"/>
        <end position="556"/>
    </location>
</feature>
<feature type="active site" description="Proton acceptor" evidence="1">
    <location>
        <position position="475"/>
    </location>
</feature>
<feature type="binding site" evidence="1">
    <location>
        <begin position="6"/>
        <end position="35"/>
    </location>
    <ligand>
        <name>FAD</name>
        <dbReference type="ChEBI" id="CHEBI:57692"/>
    </ligand>
</feature>
<dbReference type="EC" id="1.1.99.1" evidence="1"/>
<dbReference type="EC" id="1.2.1.8" evidence="1"/>
<dbReference type="EMBL" id="AE008922">
    <property type="protein sequence ID" value="AAM42674.1"/>
    <property type="molecule type" value="Genomic_DNA"/>
</dbReference>
<dbReference type="RefSeq" id="NP_638750.1">
    <property type="nucleotide sequence ID" value="NC_003902.1"/>
</dbReference>
<dbReference type="RefSeq" id="WP_011038502.1">
    <property type="nucleotide sequence ID" value="NC_003902.1"/>
</dbReference>
<dbReference type="SMR" id="Q8P5D7"/>
<dbReference type="STRING" id="190485.XCC3404"/>
<dbReference type="EnsemblBacteria" id="AAM42674">
    <property type="protein sequence ID" value="AAM42674"/>
    <property type="gene ID" value="XCC3404"/>
</dbReference>
<dbReference type="KEGG" id="xcc:XCC3404"/>
<dbReference type="PATRIC" id="fig|190485.4.peg.3641"/>
<dbReference type="eggNOG" id="COG2303">
    <property type="taxonomic scope" value="Bacteria"/>
</dbReference>
<dbReference type="HOGENOM" id="CLU_002865_7_1_6"/>
<dbReference type="OrthoDB" id="9785276at2"/>
<dbReference type="UniPathway" id="UPA00529">
    <property type="reaction ID" value="UER00385"/>
</dbReference>
<dbReference type="Proteomes" id="UP000001010">
    <property type="component" value="Chromosome"/>
</dbReference>
<dbReference type="GO" id="GO:0016020">
    <property type="term" value="C:membrane"/>
    <property type="evidence" value="ECO:0000318"/>
    <property type="project" value="GO_Central"/>
</dbReference>
<dbReference type="GO" id="GO:0008802">
    <property type="term" value="F:betaine-aldehyde dehydrogenase (NAD+) activity"/>
    <property type="evidence" value="ECO:0007669"/>
    <property type="project" value="UniProtKB-EC"/>
</dbReference>
<dbReference type="GO" id="GO:0008812">
    <property type="term" value="F:choline dehydrogenase activity"/>
    <property type="evidence" value="ECO:0000318"/>
    <property type="project" value="GO_Central"/>
</dbReference>
<dbReference type="GO" id="GO:0050660">
    <property type="term" value="F:flavin adenine dinucleotide binding"/>
    <property type="evidence" value="ECO:0007669"/>
    <property type="project" value="InterPro"/>
</dbReference>
<dbReference type="GO" id="GO:0019285">
    <property type="term" value="P:glycine betaine biosynthetic process from choline"/>
    <property type="evidence" value="ECO:0000318"/>
    <property type="project" value="GO_Central"/>
</dbReference>
<dbReference type="Gene3D" id="3.50.50.60">
    <property type="entry name" value="FAD/NAD(P)-binding domain"/>
    <property type="match status" value="1"/>
</dbReference>
<dbReference type="Gene3D" id="3.30.560.10">
    <property type="entry name" value="Glucose Oxidase, domain 3"/>
    <property type="match status" value="1"/>
</dbReference>
<dbReference type="HAMAP" id="MF_00750">
    <property type="entry name" value="Choline_dehydrogen"/>
    <property type="match status" value="1"/>
</dbReference>
<dbReference type="InterPro" id="IPR011533">
    <property type="entry name" value="BetA"/>
</dbReference>
<dbReference type="InterPro" id="IPR036188">
    <property type="entry name" value="FAD/NAD-bd_sf"/>
</dbReference>
<dbReference type="InterPro" id="IPR012132">
    <property type="entry name" value="GMC_OxRdtase"/>
</dbReference>
<dbReference type="InterPro" id="IPR000172">
    <property type="entry name" value="GMC_OxRdtase_N"/>
</dbReference>
<dbReference type="InterPro" id="IPR007867">
    <property type="entry name" value="GMC_OxRtase_C"/>
</dbReference>
<dbReference type="NCBIfam" id="TIGR01810">
    <property type="entry name" value="betA"/>
    <property type="match status" value="1"/>
</dbReference>
<dbReference type="NCBIfam" id="NF002550">
    <property type="entry name" value="PRK02106.1"/>
    <property type="match status" value="1"/>
</dbReference>
<dbReference type="PANTHER" id="PTHR11552:SF147">
    <property type="entry name" value="CHOLINE DEHYDROGENASE, MITOCHONDRIAL"/>
    <property type="match status" value="1"/>
</dbReference>
<dbReference type="PANTHER" id="PTHR11552">
    <property type="entry name" value="GLUCOSE-METHANOL-CHOLINE GMC OXIDOREDUCTASE"/>
    <property type="match status" value="1"/>
</dbReference>
<dbReference type="Pfam" id="PF05199">
    <property type="entry name" value="GMC_oxred_C"/>
    <property type="match status" value="1"/>
</dbReference>
<dbReference type="Pfam" id="PF00732">
    <property type="entry name" value="GMC_oxred_N"/>
    <property type="match status" value="1"/>
</dbReference>
<dbReference type="PIRSF" id="PIRSF000137">
    <property type="entry name" value="Alcohol_oxidase"/>
    <property type="match status" value="1"/>
</dbReference>
<dbReference type="SUPFAM" id="SSF54373">
    <property type="entry name" value="FAD-linked reductases, C-terminal domain"/>
    <property type="match status" value="1"/>
</dbReference>
<dbReference type="SUPFAM" id="SSF51905">
    <property type="entry name" value="FAD/NAD(P)-binding domain"/>
    <property type="match status" value="1"/>
</dbReference>
<dbReference type="PROSITE" id="PS00623">
    <property type="entry name" value="GMC_OXRED_1"/>
    <property type="match status" value="1"/>
</dbReference>
<dbReference type="PROSITE" id="PS00624">
    <property type="entry name" value="GMC_OXRED_2"/>
    <property type="match status" value="1"/>
</dbReference>
<gene>
    <name evidence="1" type="primary">betA</name>
    <name type="ordered locus">XCC3404</name>
</gene>
<accession>Q8P5D7</accession>
<proteinExistence type="inferred from homology"/>
<evidence type="ECO:0000255" key="1">
    <source>
        <dbReference type="HAMAP-Rule" id="MF_00750"/>
    </source>
</evidence>
<sequence>MQREYDYIIIGAGSAGNVLAARLTEDPGVSVLLLEAGGPDYRLDFRTQMPAALAFPLQGRRYNWAYETEPEPHMDNRRMECGRGKGLGGSSLINGMCYIRGNALDFDHWAKRPGLEDWGYRDVLPYFRKAETRDIGANDYHGGEGPVSVATPKNDNNVLFQAMVDAGVQAGYPRTDDLNGYQQEGFGPMDRTVTPQGRRASTARGYLDMAKPRDSLHIVTHATTDRILFAGKRAVGVHYLVGNSSEGIDAHARREVLVCAGAIASPQLLQRSGVGAPDLLRALDVQLVHDLPGVGQNLQDHLEVYMQYACTKPVSLYPALQWWNQPAIGAEWLFAGTGTGASNQFEAGGFIRTREEFDWPNIQYHFLPVAINYNGSNAVKEHGFQAHVGSMRTPSRGRVHARSRDPRQHPSILFNYQSTDQDWQEFRDAIRITREIIAQPALDPYRGREISPSADCKTDAELDAFVRARAETAYHPSCSCAMGTDDMAVVDGQGRVHGMEGLRVIDASIMPRIITGNLNATTIMIAEKIVDRIRGRAPLPRSTADYYVAGDAPVRR</sequence>
<keyword id="KW-0274">FAD</keyword>
<keyword id="KW-0285">Flavoprotein</keyword>
<keyword id="KW-0520">NAD</keyword>
<keyword id="KW-0560">Oxidoreductase</keyword>
<keyword id="KW-1185">Reference proteome</keyword>
<organism>
    <name type="scientific">Xanthomonas campestris pv. campestris (strain ATCC 33913 / DSM 3586 / NCPPB 528 / LMG 568 / P 25)</name>
    <dbReference type="NCBI Taxonomy" id="190485"/>
    <lineage>
        <taxon>Bacteria</taxon>
        <taxon>Pseudomonadati</taxon>
        <taxon>Pseudomonadota</taxon>
        <taxon>Gammaproteobacteria</taxon>
        <taxon>Lysobacterales</taxon>
        <taxon>Lysobacteraceae</taxon>
        <taxon>Xanthomonas</taxon>
    </lineage>
</organism>
<protein>
    <recommendedName>
        <fullName evidence="1">Oxygen-dependent choline dehydrogenase</fullName>
        <shortName evidence="1">CDH</shortName>
        <shortName evidence="1">CHD</shortName>
        <ecNumber evidence="1">1.1.99.1</ecNumber>
    </recommendedName>
    <alternativeName>
        <fullName evidence="1">Betaine aldehyde dehydrogenase</fullName>
        <shortName evidence="1">BADH</shortName>
        <ecNumber evidence="1">1.2.1.8</ecNumber>
    </alternativeName>
</protein>